<reference key="1">
    <citation type="journal article" date="2009" name="J. Bacteriol.">
        <title>Complete and draft genome sequences of six members of the Aquificales.</title>
        <authorList>
            <person name="Reysenbach A.-L."/>
            <person name="Hamamura N."/>
            <person name="Podar M."/>
            <person name="Griffiths E."/>
            <person name="Ferreira S."/>
            <person name="Hochstein R."/>
            <person name="Heidelberg J."/>
            <person name="Johnson J."/>
            <person name="Mead D."/>
            <person name="Pohorille A."/>
            <person name="Sarmiento M."/>
            <person name="Schweighofer K."/>
            <person name="Seshadri R."/>
            <person name="Voytek M.A."/>
        </authorList>
    </citation>
    <scope>NUCLEOTIDE SEQUENCE [LARGE SCALE GENOMIC DNA]</scope>
    <source>
        <strain>DSM 14350 / EX-H1</strain>
    </source>
</reference>
<proteinExistence type="inferred from homology"/>
<gene>
    <name evidence="1" type="primary">dapA</name>
    <name type="ordered locus">PERMA_0058</name>
</gene>
<sequence>MFKGSIVALITPFKDGAIDRKSLKRLIDFHVEKGTDGIVIAGTTGESATLTFSEHEDLIKMAVEFADKRIPIIAGTGANATHEAIALTKSAEKAGADGSLQIVPYYNKPTQEGIYQHFKAIAEETSIPLILYNIPSRTGVDMLPETFARLYSDFPNVIGIKEATGNVARVSEMISLTNPDVVILSGDDALTLPMMAVGAKGVISVANNLVPEDIATMCRLALEGRFEEARQIHDRYWKLFKTLFIETNPIPVKTAAYLMGLIDDIEMRLPLYYMKPENEEKLKSVLKDYGLIR</sequence>
<feature type="chain" id="PRO_1000134875" description="4-hydroxy-tetrahydrodipicolinate synthase">
    <location>
        <begin position="1"/>
        <end position="293"/>
    </location>
</feature>
<feature type="active site" description="Proton donor/acceptor" evidence="1">
    <location>
        <position position="132"/>
    </location>
</feature>
<feature type="active site" description="Schiff-base intermediate with substrate" evidence="1">
    <location>
        <position position="161"/>
    </location>
</feature>
<feature type="binding site" evidence="1">
    <location>
        <position position="44"/>
    </location>
    <ligand>
        <name>pyruvate</name>
        <dbReference type="ChEBI" id="CHEBI:15361"/>
    </ligand>
</feature>
<feature type="binding site" evidence="1">
    <location>
        <position position="203"/>
    </location>
    <ligand>
        <name>pyruvate</name>
        <dbReference type="ChEBI" id="CHEBI:15361"/>
    </ligand>
</feature>
<feature type="site" description="Part of a proton relay during catalysis" evidence="1">
    <location>
        <position position="43"/>
    </location>
</feature>
<feature type="site" description="Part of a proton relay during catalysis" evidence="1">
    <location>
        <position position="106"/>
    </location>
</feature>
<organism>
    <name type="scientific">Persephonella marina (strain DSM 14350 / EX-H1)</name>
    <dbReference type="NCBI Taxonomy" id="123214"/>
    <lineage>
        <taxon>Bacteria</taxon>
        <taxon>Pseudomonadati</taxon>
        <taxon>Aquificota</taxon>
        <taxon>Aquificia</taxon>
        <taxon>Aquificales</taxon>
        <taxon>Hydrogenothermaceae</taxon>
        <taxon>Persephonella</taxon>
    </lineage>
</organism>
<evidence type="ECO:0000255" key="1">
    <source>
        <dbReference type="HAMAP-Rule" id="MF_00418"/>
    </source>
</evidence>
<evidence type="ECO:0000305" key="2"/>
<name>DAPA_PERMH</name>
<comment type="function">
    <text evidence="1">Catalyzes the condensation of (S)-aspartate-beta-semialdehyde [(S)-ASA] and pyruvate to 4-hydroxy-tetrahydrodipicolinate (HTPA).</text>
</comment>
<comment type="catalytic activity">
    <reaction evidence="1">
        <text>L-aspartate 4-semialdehyde + pyruvate = (2S,4S)-4-hydroxy-2,3,4,5-tetrahydrodipicolinate + H2O + H(+)</text>
        <dbReference type="Rhea" id="RHEA:34171"/>
        <dbReference type="ChEBI" id="CHEBI:15361"/>
        <dbReference type="ChEBI" id="CHEBI:15377"/>
        <dbReference type="ChEBI" id="CHEBI:15378"/>
        <dbReference type="ChEBI" id="CHEBI:67139"/>
        <dbReference type="ChEBI" id="CHEBI:537519"/>
        <dbReference type="EC" id="4.3.3.7"/>
    </reaction>
</comment>
<comment type="pathway">
    <text evidence="1">Amino-acid biosynthesis; L-lysine biosynthesis via DAP pathway; (S)-tetrahydrodipicolinate from L-aspartate: step 3/4.</text>
</comment>
<comment type="subunit">
    <text evidence="1">Homotetramer; dimer of dimers.</text>
</comment>
<comment type="subcellular location">
    <subcellularLocation>
        <location evidence="1">Cytoplasm</location>
    </subcellularLocation>
</comment>
<comment type="similarity">
    <text evidence="1">Belongs to the DapA family.</text>
</comment>
<comment type="caution">
    <text evidence="2">Was originally thought to be a dihydrodipicolinate synthase (DHDPS), catalyzing the condensation of (S)-aspartate-beta-semialdehyde [(S)-ASA] and pyruvate to dihydrodipicolinate (DHDP). However, it was shown in E.coli that the product of the enzymatic reaction is not dihydrodipicolinate but in fact (4S)-4-hydroxy-2,3,4,5-tetrahydro-(2S)-dipicolinic acid (HTPA), and that the consecutive dehydration reaction leading to DHDP is not spontaneous but catalyzed by DapB.</text>
</comment>
<dbReference type="EC" id="4.3.3.7" evidence="1"/>
<dbReference type="EMBL" id="CP001230">
    <property type="protein sequence ID" value="ACO03721.1"/>
    <property type="molecule type" value="Genomic_DNA"/>
</dbReference>
<dbReference type="RefSeq" id="WP_012675960.1">
    <property type="nucleotide sequence ID" value="NC_012440.1"/>
</dbReference>
<dbReference type="SMR" id="C0QT41"/>
<dbReference type="STRING" id="123214.PERMA_0058"/>
<dbReference type="PaxDb" id="123214-PERMA_0058"/>
<dbReference type="KEGG" id="pmx:PERMA_0058"/>
<dbReference type="eggNOG" id="COG0329">
    <property type="taxonomic scope" value="Bacteria"/>
</dbReference>
<dbReference type="HOGENOM" id="CLU_049343_7_1_0"/>
<dbReference type="OrthoDB" id="9782828at2"/>
<dbReference type="UniPathway" id="UPA00034">
    <property type="reaction ID" value="UER00017"/>
</dbReference>
<dbReference type="Proteomes" id="UP000001366">
    <property type="component" value="Chromosome"/>
</dbReference>
<dbReference type="GO" id="GO:0005829">
    <property type="term" value="C:cytosol"/>
    <property type="evidence" value="ECO:0007669"/>
    <property type="project" value="TreeGrafter"/>
</dbReference>
<dbReference type="GO" id="GO:0008840">
    <property type="term" value="F:4-hydroxy-tetrahydrodipicolinate synthase activity"/>
    <property type="evidence" value="ECO:0007669"/>
    <property type="project" value="UniProtKB-UniRule"/>
</dbReference>
<dbReference type="GO" id="GO:0019877">
    <property type="term" value="P:diaminopimelate biosynthetic process"/>
    <property type="evidence" value="ECO:0007669"/>
    <property type="project" value="UniProtKB-UniRule"/>
</dbReference>
<dbReference type="GO" id="GO:0009089">
    <property type="term" value="P:lysine biosynthetic process via diaminopimelate"/>
    <property type="evidence" value="ECO:0007669"/>
    <property type="project" value="UniProtKB-UniRule"/>
</dbReference>
<dbReference type="CDD" id="cd00950">
    <property type="entry name" value="DHDPS"/>
    <property type="match status" value="1"/>
</dbReference>
<dbReference type="Gene3D" id="3.20.20.70">
    <property type="entry name" value="Aldolase class I"/>
    <property type="match status" value="1"/>
</dbReference>
<dbReference type="HAMAP" id="MF_00418">
    <property type="entry name" value="DapA"/>
    <property type="match status" value="1"/>
</dbReference>
<dbReference type="InterPro" id="IPR013785">
    <property type="entry name" value="Aldolase_TIM"/>
</dbReference>
<dbReference type="InterPro" id="IPR005263">
    <property type="entry name" value="DapA"/>
</dbReference>
<dbReference type="InterPro" id="IPR002220">
    <property type="entry name" value="DapA-like"/>
</dbReference>
<dbReference type="InterPro" id="IPR020625">
    <property type="entry name" value="Schiff_base-form_aldolases_AS"/>
</dbReference>
<dbReference type="InterPro" id="IPR020624">
    <property type="entry name" value="Schiff_base-form_aldolases_CS"/>
</dbReference>
<dbReference type="NCBIfam" id="TIGR00674">
    <property type="entry name" value="dapA"/>
    <property type="match status" value="1"/>
</dbReference>
<dbReference type="PANTHER" id="PTHR12128:SF66">
    <property type="entry name" value="4-HYDROXY-2-OXOGLUTARATE ALDOLASE, MITOCHONDRIAL"/>
    <property type="match status" value="1"/>
</dbReference>
<dbReference type="PANTHER" id="PTHR12128">
    <property type="entry name" value="DIHYDRODIPICOLINATE SYNTHASE"/>
    <property type="match status" value="1"/>
</dbReference>
<dbReference type="Pfam" id="PF00701">
    <property type="entry name" value="DHDPS"/>
    <property type="match status" value="1"/>
</dbReference>
<dbReference type="PIRSF" id="PIRSF001365">
    <property type="entry name" value="DHDPS"/>
    <property type="match status" value="1"/>
</dbReference>
<dbReference type="PRINTS" id="PR00146">
    <property type="entry name" value="DHPICSNTHASE"/>
</dbReference>
<dbReference type="SMART" id="SM01130">
    <property type="entry name" value="DHDPS"/>
    <property type="match status" value="1"/>
</dbReference>
<dbReference type="SUPFAM" id="SSF51569">
    <property type="entry name" value="Aldolase"/>
    <property type="match status" value="1"/>
</dbReference>
<dbReference type="PROSITE" id="PS00665">
    <property type="entry name" value="DHDPS_1"/>
    <property type="match status" value="1"/>
</dbReference>
<dbReference type="PROSITE" id="PS00666">
    <property type="entry name" value="DHDPS_2"/>
    <property type="match status" value="1"/>
</dbReference>
<accession>C0QT41</accession>
<keyword id="KW-0028">Amino-acid biosynthesis</keyword>
<keyword id="KW-0963">Cytoplasm</keyword>
<keyword id="KW-0220">Diaminopimelate biosynthesis</keyword>
<keyword id="KW-0456">Lyase</keyword>
<keyword id="KW-0457">Lysine biosynthesis</keyword>
<keyword id="KW-1185">Reference proteome</keyword>
<keyword id="KW-0704">Schiff base</keyword>
<protein>
    <recommendedName>
        <fullName evidence="1">4-hydroxy-tetrahydrodipicolinate synthase</fullName>
        <shortName evidence="1">HTPA synthase</shortName>
        <ecNumber evidence="1">4.3.3.7</ecNumber>
    </recommendedName>
</protein>